<accession>B3CLT1</accession>
<keyword id="KW-0030">Aminoacyl-tRNA synthetase</keyword>
<keyword id="KW-0067">ATP-binding</keyword>
<keyword id="KW-0963">Cytoplasm</keyword>
<keyword id="KW-0436">Ligase</keyword>
<keyword id="KW-0547">Nucleotide-binding</keyword>
<keyword id="KW-0648">Protein biosynthesis</keyword>
<name>SYL_WOLPP</name>
<comment type="catalytic activity">
    <reaction evidence="1">
        <text>tRNA(Leu) + L-leucine + ATP = L-leucyl-tRNA(Leu) + AMP + diphosphate</text>
        <dbReference type="Rhea" id="RHEA:11688"/>
        <dbReference type="Rhea" id="RHEA-COMP:9613"/>
        <dbReference type="Rhea" id="RHEA-COMP:9622"/>
        <dbReference type="ChEBI" id="CHEBI:30616"/>
        <dbReference type="ChEBI" id="CHEBI:33019"/>
        <dbReference type="ChEBI" id="CHEBI:57427"/>
        <dbReference type="ChEBI" id="CHEBI:78442"/>
        <dbReference type="ChEBI" id="CHEBI:78494"/>
        <dbReference type="ChEBI" id="CHEBI:456215"/>
        <dbReference type="EC" id="6.1.1.4"/>
    </reaction>
</comment>
<comment type="subcellular location">
    <subcellularLocation>
        <location evidence="1">Cytoplasm</location>
    </subcellularLocation>
</comment>
<comment type="similarity">
    <text evidence="1">Belongs to the class-I aminoacyl-tRNA synthetase family.</text>
</comment>
<sequence>MKYDFKNVEKFYQNKWDFSVSKDSKKKKCYVLEMFPYPSGKIHMGHLRNYAIGDVIARYKRARGFEVLHPIGWDAFGLPAENAARDNNINPAAWTQDNIDNMRTQLKSIGLSYNWDRELSTCEPDYYKHEQKFFLDFLKHGLAYRKESWVNWDPVDQTVLANEQVVDGKGWRSGAVVEKRKLFQWFLKITDFAEDLLHCLQSLKNWPEKVKTMQERWIGKSEGATIDFEIFGLNKKLKIFTTSPHTLFGASFLAVGAEHPIVQDLKDKEIRDFIGNMKAKGENDEKIGIYTGLNVKHPFLDKELPLYIANFVLMEYGEGAIFGCPAHDQRDFEFAQKYGLPIIPVVCEESTEILKEPYFGDGVMFNSEFLNGLMINEAKKVIIKKLEEKGIGKKTINYRLHDWGISRQRYWGCPIPIIHCKDCGIVPVPEKDLPVVLPTDVEFTSGGNPLDKHPTWKFVDCPKCGKQAERETDTFDTFFESSWYFAAFCSENKSINKDTCNRFMPVDYYIGGIEHAILHLLYSRFFCRALTKCGYFDVKEPFSTLITQGMVCHITYKDENGKWLFPEEAKELIAKGAKIQVGKVEKMSKSKKNTVDPNFIIEKYGADTARLFVLSDTPPEKDMEWSDDGVEGCFRYINKLWRMVVQLRTVNIHYDNENIVGKLLEYRKKIHKLLHGLTDDLENCRLNCVVAKFREMTNLIAEIDVKTGKSLIDEGICILIRVIEPLMPHLAENLWQEIGGEGMLYMQPWPKADESLLIDNMVTVAVQINGKLRATIKVETDLPQEELKKIATDSVSNKIDQSKIRTIYAVPNKVVNIVI</sequence>
<protein>
    <recommendedName>
        <fullName evidence="1">Leucine--tRNA ligase</fullName>
        <ecNumber evidence="1">6.1.1.4</ecNumber>
    </recommendedName>
    <alternativeName>
        <fullName evidence="1">Leucyl-tRNA synthetase</fullName>
        <shortName evidence="1">LeuRS</shortName>
    </alternativeName>
</protein>
<organism>
    <name type="scientific">Wolbachia pipientis subsp. Culex pipiens (strain wPip)</name>
    <dbReference type="NCBI Taxonomy" id="570417"/>
    <lineage>
        <taxon>Bacteria</taxon>
        <taxon>Pseudomonadati</taxon>
        <taxon>Pseudomonadota</taxon>
        <taxon>Alphaproteobacteria</taxon>
        <taxon>Rickettsiales</taxon>
        <taxon>Anaplasmataceae</taxon>
        <taxon>Wolbachieae</taxon>
        <taxon>Wolbachia</taxon>
    </lineage>
</organism>
<evidence type="ECO:0000255" key="1">
    <source>
        <dbReference type="HAMAP-Rule" id="MF_00049"/>
    </source>
</evidence>
<dbReference type="EC" id="6.1.1.4" evidence="1"/>
<dbReference type="EMBL" id="AM999887">
    <property type="protein sequence ID" value="CAQ54849.1"/>
    <property type="molecule type" value="Genomic_DNA"/>
</dbReference>
<dbReference type="RefSeq" id="WP_012481901.1">
    <property type="nucleotide sequence ID" value="NC_010981.1"/>
</dbReference>
<dbReference type="SMR" id="B3CLT1"/>
<dbReference type="KEGG" id="wpi:WP0741"/>
<dbReference type="eggNOG" id="COG0495">
    <property type="taxonomic scope" value="Bacteria"/>
</dbReference>
<dbReference type="HOGENOM" id="CLU_004427_0_0_5"/>
<dbReference type="Proteomes" id="UP000008814">
    <property type="component" value="Chromosome"/>
</dbReference>
<dbReference type="GO" id="GO:0005829">
    <property type="term" value="C:cytosol"/>
    <property type="evidence" value="ECO:0007669"/>
    <property type="project" value="TreeGrafter"/>
</dbReference>
<dbReference type="GO" id="GO:0002161">
    <property type="term" value="F:aminoacyl-tRNA deacylase activity"/>
    <property type="evidence" value="ECO:0007669"/>
    <property type="project" value="InterPro"/>
</dbReference>
<dbReference type="GO" id="GO:0005524">
    <property type="term" value="F:ATP binding"/>
    <property type="evidence" value="ECO:0007669"/>
    <property type="project" value="UniProtKB-UniRule"/>
</dbReference>
<dbReference type="GO" id="GO:0004823">
    <property type="term" value="F:leucine-tRNA ligase activity"/>
    <property type="evidence" value="ECO:0007669"/>
    <property type="project" value="UniProtKB-UniRule"/>
</dbReference>
<dbReference type="GO" id="GO:0006429">
    <property type="term" value="P:leucyl-tRNA aminoacylation"/>
    <property type="evidence" value="ECO:0007669"/>
    <property type="project" value="UniProtKB-UniRule"/>
</dbReference>
<dbReference type="CDD" id="cd07958">
    <property type="entry name" value="Anticodon_Ia_Leu_BEm"/>
    <property type="match status" value="1"/>
</dbReference>
<dbReference type="CDD" id="cd00812">
    <property type="entry name" value="LeuRS_core"/>
    <property type="match status" value="1"/>
</dbReference>
<dbReference type="FunFam" id="1.10.730.10:FF:000002">
    <property type="entry name" value="Leucine--tRNA ligase"/>
    <property type="match status" value="1"/>
</dbReference>
<dbReference type="Gene3D" id="3.40.50.620">
    <property type="entry name" value="HUPs"/>
    <property type="match status" value="2"/>
</dbReference>
<dbReference type="Gene3D" id="1.10.730.10">
    <property type="entry name" value="Isoleucyl-tRNA Synthetase, Domain 1"/>
    <property type="match status" value="1"/>
</dbReference>
<dbReference type="HAMAP" id="MF_00049_B">
    <property type="entry name" value="Leu_tRNA_synth_B"/>
    <property type="match status" value="1"/>
</dbReference>
<dbReference type="InterPro" id="IPR001412">
    <property type="entry name" value="aa-tRNA-synth_I_CS"/>
</dbReference>
<dbReference type="InterPro" id="IPR002300">
    <property type="entry name" value="aa-tRNA-synth_Ia"/>
</dbReference>
<dbReference type="InterPro" id="IPR002302">
    <property type="entry name" value="Leu-tRNA-ligase"/>
</dbReference>
<dbReference type="InterPro" id="IPR025709">
    <property type="entry name" value="Leu_tRNA-synth_edit"/>
</dbReference>
<dbReference type="InterPro" id="IPR013155">
    <property type="entry name" value="M/V/L/I-tRNA-synth_anticd-bd"/>
</dbReference>
<dbReference type="InterPro" id="IPR015413">
    <property type="entry name" value="Methionyl/Leucyl_tRNA_Synth"/>
</dbReference>
<dbReference type="InterPro" id="IPR014729">
    <property type="entry name" value="Rossmann-like_a/b/a_fold"/>
</dbReference>
<dbReference type="InterPro" id="IPR009080">
    <property type="entry name" value="tRNAsynth_Ia_anticodon-bd"/>
</dbReference>
<dbReference type="InterPro" id="IPR009008">
    <property type="entry name" value="Val/Leu/Ile-tRNA-synth_edit"/>
</dbReference>
<dbReference type="NCBIfam" id="TIGR00396">
    <property type="entry name" value="leuS_bact"/>
    <property type="match status" value="1"/>
</dbReference>
<dbReference type="PANTHER" id="PTHR43740:SF2">
    <property type="entry name" value="LEUCINE--TRNA LIGASE, MITOCHONDRIAL"/>
    <property type="match status" value="1"/>
</dbReference>
<dbReference type="PANTHER" id="PTHR43740">
    <property type="entry name" value="LEUCYL-TRNA SYNTHETASE"/>
    <property type="match status" value="1"/>
</dbReference>
<dbReference type="Pfam" id="PF08264">
    <property type="entry name" value="Anticodon_1"/>
    <property type="match status" value="1"/>
</dbReference>
<dbReference type="Pfam" id="PF00133">
    <property type="entry name" value="tRNA-synt_1"/>
    <property type="match status" value="1"/>
</dbReference>
<dbReference type="Pfam" id="PF13603">
    <property type="entry name" value="tRNA-synt_1_2"/>
    <property type="match status" value="1"/>
</dbReference>
<dbReference type="Pfam" id="PF09334">
    <property type="entry name" value="tRNA-synt_1g"/>
    <property type="match status" value="1"/>
</dbReference>
<dbReference type="PRINTS" id="PR00985">
    <property type="entry name" value="TRNASYNTHLEU"/>
</dbReference>
<dbReference type="SUPFAM" id="SSF47323">
    <property type="entry name" value="Anticodon-binding domain of a subclass of class I aminoacyl-tRNA synthetases"/>
    <property type="match status" value="1"/>
</dbReference>
<dbReference type="SUPFAM" id="SSF52374">
    <property type="entry name" value="Nucleotidylyl transferase"/>
    <property type="match status" value="1"/>
</dbReference>
<dbReference type="SUPFAM" id="SSF50677">
    <property type="entry name" value="ValRS/IleRS/LeuRS editing domain"/>
    <property type="match status" value="1"/>
</dbReference>
<dbReference type="PROSITE" id="PS00178">
    <property type="entry name" value="AA_TRNA_LIGASE_I"/>
    <property type="match status" value="1"/>
</dbReference>
<proteinExistence type="inferred from homology"/>
<feature type="chain" id="PRO_1000091378" description="Leucine--tRNA ligase">
    <location>
        <begin position="1"/>
        <end position="819"/>
    </location>
</feature>
<feature type="short sequence motif" description="'HIGH' region">
    <location>
        <begin position="36"/>
        <end position="46"/>
    </location>
</feature>
<feature type="short sequence motif" description="'KMSKS' region">
    <location>
        <begin position="586"/>
        <end position="590"/>
    </location>
</feature>
<feature type="binding site" evidence="1">
    <location>
        <position position="589"/>
    </location>
    <ligand>
        <name>ATP</name>
        <dbReference type="ChEBI" id="CHEBI:30616"/>
    </ligand>
</feature>
<gene>
    <name evidence="1" type="primary">leuS</name>
    <name type="ordered locus">WP0741</name>
</gene>
<reference key="1">
    <citation type="journal article" date="2008" name="Mol. Biol. Evol.">
        <title>Genome evolution of Wolbachia strain wPip from the Culex pipiens group.</title>
        <authorList>
            <person name="Klasson L."/>
            <person name="Walker T."/>
            <person name="Sebaihia M."/>
            <person name="Sanders M.J."/>
            <person name="Quail M.A."/>
            <person name="Lord A."/>
            <person name="Sanders S."/>
            <person name="Earl J."/>
            <person name="O'Neill S.L."/>
            <person name="Thomson N."/>
            <person name="Sinkins S.P."/>
            <person name="Parkhill J."/>
        </authorList>
    </citation>
    <scope>NUCLEOTIDE SEQUENCE [LARGE SCALE GENOMIC DNA]</scope>
    <source>
        <strain>wPip</strain>
    </source>
</reference>